<protein>
    <recommendedName>
        <fullName evidence="1">Xylose isomerase</fullName>
        <ecNumber evidence="1">5.3.1.5</ecNumber>
    </recommendedName>
</protein>
<reference key="1">
    <citation type="submission" date="2007-12" db="EMBL/GenBank/DDBJ databases">
        <title>Brucella suis ATCC 23445 whole genome shotgun sequencing project.</title>
        <authorList>
            <person name="Setubal J.C."/>
            <person name="Bowns C."/>
            <person name="Boyle S."/>
            <person name="Crasta O.R."/>
            <person name="Czar M.J."/>
            <person name="Dharmanolla C."/>
            <person name="Gillespie J.J."/>
            <person name="Kenyon R.W."/>
            <person name="Lu J."/>
            <person name="Mane S."/>
            <person name="Mohapatra S."/>
            <person name="Nagrani S."/>
            <person name="Purkayastha A."/>
            <person name="Rajasimha H.K."/>
            <person name="Shallom J.M."/>
            <person name="Shallom S."/>
            <person name="Shukla M."/>
            <person name="Snyder E.E."/>
            <person name="Sobral B.W."/>
            <person name="Wattam A.R."/>
            <person name="Will R."/>
            <person name="Williams K."/>
            <person name="Yoo H."/>
            <person name="Bruce D."/>
            <person name="Detter C."/>
            <person name="Munk C."/>
            <person name="Brettin T.S."/>
        </authorList>
    </citation>
    <scope>NUCLEOTIDE SEQUENCE [LARGE SCALE GENOMIC DNA]</scope>
    <source>
        <strain>ATCC 23445 / NCTC 10510</strain>
    </source>
</reference>
<dbReference type="EC" id="5.3.1.5" evidence="1"/>
<dbReference type="EMBL" id="CP000911">
    <property type="protein sequence ID" value="ABY37659.1"/>
    <property type="molecule type" value="Genomic_DNA"/>
</dbReference>
<dbReference type="RefSeq" id="WP_006072330.1">
    <property type="nucleotide sequence ID" value="NC_010169.1"/>
</dbReference>
<dbReference type="SMR" id="B0CKM9"/>
<dbReference type="KEGG" id="bmt:BSUIS_A0576"/>
<dbReference type="HOGENOM" id="CLU_037261_1_0_5"/>
<dbReference type="Proteomes" id="UP000008545">
    <property type="component" value="Chromosome I"/>
</dbReference>
<dbReference type="GO" id="GO:0005737">
    <property type="term" value="C:cytoplasm"/>
    <property type="evidence" value="ECO:0007669"/>
    <property type="project" value="UniProtKB-SubCell"/>
</dbReference>
<dbReference type="GO" id="GO:0000287">
    <property type="term" value="F:magnesium ion binding"/>
    <property type="evidence" value="ECO:0007669"/>
    <property type="project" value="UniProtKB-UniRule"/>
</dbReference>
<dbReference type="GO" id="GO:0009045">
    <property type="term" value="F:xylose isomerase activity"/>
    <property type="evidence" value="ECO:0007669"/>
    <property type="project" value="UniProtKB-UniRule"/>
</dbReference>
<dbReference type="GO" id="GO:0042732">
    <property type="term" value="P:D-xylose metabolic process"/>
    <property type="evidence" value="ECO:0007669"/>
    <property type="project" value="UniProtKB-UniRule"/>
</dbReference>
<dbReference type="FunFam" id="3.20.20.150:FF:000002">
    <property type="entry name" value="Xylose isomerase"/>
    <property type="match status" value="1"/>
</dbReference>
<dbReference type="Gene3D" id="3.20.20.150">
    <property type="entry name" value="Divalent-metal-dependent TIM barrel enzymes"/>
    <property type="match status" value="1"/>
</dbReference>
<dbReference type="HAMAP" id="MF_00455">
    <property type="entry name" value="Xylose_isom_A"/>
    <property type="match status" value="1"/>
</dbReference>
<dbReference type="InterPro" id="IPR036237">
    <property type="entry name" value="Xyl_isomerase-like_sf"/>
</dbReference>
<dbReference type="InterPro" id="IPR013452">
    <property type="entry name" value="Xylose_isom_bac"/>
</dbReference>
<dbReference type="InterPro" id="IPR001998">
    <property type="entry name" value="Xylose_isomerase"/>
</dbReference>
<dbReference type="NCBIfam" id="NF003998">
    <property type="entry name" value="PRK05474.1"/>
    <property type="match status" value="1"/>
</dbReference>
<dbReference type="NCBIfam" id="TIGR02630">
    <property type="entry name" value="xylose_isom_A"/>
    <property type="match status" value="1"/>
</dbReference>
<dbReference type="PANTHER" id="PTHR48408">
    <property type="match status" value="1"/>
</dbReference>
<dbReference type="PANTHER" id="PTHR48408:SF1">
    <property type="entry name" value="XYLOSE ISOMERASE"/>
    <property type="match status" value="1"/>
</dbReference>
<dbReference type="PRINTS" id="PR00688">
    <property type="entry name" value="XYLOSISMRASE"/>
</dbReference>
<dbReference type="SUPFAM" id="SSF51658">
    <property type="entry name" value="Xylose isomerase-like"/>
    <property type="match status" value="1"/>
</dbReference>
<dbReference type="PROSITE" id="PS51415">
    <property type="entry name" value="XYLOSE_ISOMERASE"/>
    <property type="match status" value="1"/>
</dbReference>
<keyword id="KW-0119">Carbohydrate metabolism</keyword>
<keyword id="KW-0963">Cytoplasm</keyword>
<keyword id="KW-0413">Isomerase</keyword>
<keyword id="KW-0460">Magnesium</keyword>
<keyword id="KW-0479">Metal-binding</keyword>
<keyword id="KW-0859">Xylose metabolism</keyword>
<organism>
    <name type="scientific">Brucella suis (strain ATCC 23445 / NCTC 10510)</name>
    <dbReference type="NCBI Taxonomy" id="470137"/>
    <lineage>
        <taxon>Bacteria</taxon>
        <taxon>Pseudomonadati</taxon>
        <taxon>Pseudomonadota</taxon>
        <taxon>Alphaproteobacteria</taxon>
        <taxon>Hyphomicrobiales</taxon>
        <taxon>Brucellaceae</taxon>
        <taxon>Brucella/Ochrobactrum group</taxon>
        <taxon>Brucella</taxon>
    </lineage>
</organism>
<accession>B0CKM9</accession>
<evidence type="ECO:0000255" key="1">
    <source>
        <dbReference type="HAMAP-Rule" id="MF_00455"/>
    </source>
</evidence>
<feature type="chain" id="PRO_1000081026" description="Xylose isomerase">
    <location>
        <begin position="1"/>
        <end position="435"/>
    </location>
</feature>
<feature type="active site" evidence="1">
    <location>
        <position position="100"/>
    </location>
</feature>
<feature type="active site" evidence="1">
    <location>
        <position position="103"/>
    </location>
</feature>
<feature type="binding site" evidence="1">
    <location>
        <position position="231"/>
    </location>
    <ligand>
        <name>Mg(2+)</name>
        <dbReference type="ChEBI" id="CHEBI:18420"/>
        <label>1</label>
    </ligand>
</feature>
<feature type="binding site" evidence="1">
    <location>
        <position position="267"/>
    </location>
    <ligand>
        <name>Mg(2+)</name>
        <dbReference type="ChEBI" id="CHEBI:18420"/>
        <label>1</label>
    </ligand>
</feature>
<feature type="binding site" evidence="1">
    <location>
        <position position="267"/>
    </location>
    <ligand>
        <name>Mg(2+)</name>
        <dbReference type="ChEBI" id="CHEBI:18420"/>
        <label>2</label>
    </ligand>
</feature>
<feature type="binding site" evidence="1">
    <location>
        <position position="270"/>
    </location>
    <ligand>
        <name>Mg(2+)</name>
        <dbReference type="ChEBI" id="CHEBI:18420"/>
        <label>2</label>
    </ligand>
</feature>
<feature type="binding site" evidence="1">
    <location>
        <position position="295"/>
    </location>
    <ligand>
        <name>Mg(2+)</name>
        <dbReference type="ChEBI" id="CHEBI:18420"/>
        <label>1</label>
    </ligand>
</feature>
<feature type="binding site" evidence="1">
    <location>
        <position position="306"/>
    </location>
    <ligand>
        <name>Mg(2+)</name>
        <dbReference type="ChEBI" id="CHEBI:18420"/>
        <label>2</label>
    </ligand>
</feature>
<feature type="binding site" evidence="1">
    <location>
        <position position="308"/>
    </location>
    <ligand>
        <name>Mg(2+)</name>
        <dbReference type="ChEBI" id="CHEBI:18420"/>
        <label>2</label>
    </ligand>
</feature>
<feature type="binding site" evidence="1">
    <location>
        <position position="338"/>
    </location>
    <ligand>
        <name>Mg(2+)</name>
        <dbReference type="ChEBI" id="CHEBI:18420"/>
        <label>1</label>
    </ligand>
</feature>
<sequence>MSTGFFGDIQKVRYEGPESDNLLAFRHYNADEIVLGKRMQDHLRFAVAYWHSFAWEGGDPFGGRTFDRPWFSNEIDAAKLKADVAFEFFSLLGAPYYCFHDADVRPEGRNFAENTRYLNEIVDIFEKKQAETGMKLLWGTANLFSNRRYMAGAATNPDPDVFAFAAATVKTCIDATKRLGGENYVLWGGREGYETLLNTDLSRELDHMGRFLSLVVEYKHKIGFKGTILIEPKPQEPTKHQYDYDVATVYGFLKRYGLENEVKVNIEQGHAILAGHSFEHELALARTLGIFGSIDMNRNDYQSGWDTDQFPNNVPEKALAYYQVLLAGGFTTGGTNFDAKLRRQSLDPQDLLIGHIGGMDCCARGLKAAARMLEDGALSKPLDERYAGWNGEFGKRLLSGLSLDQIAGEVEAKDINPQPKSGRQEYLENIVNRYV</sequence>
<proteinExistence type="inferred from homology"/>
<name>XYLA_BRUSI</name>
<gene>
    <name evidence="1" type="primary">xylA</name>
    <name type="ordered locus">BSUIS_A0576</name>
</gene>
<comment type="catalytic activity">
    <reaction evidence="1">
        <text>alpha-D-xylose = alpha-D-xylulofuranose</text>
        <dbReference type="Rhea" id="RHEA:22816"/>
        <dbReference type="ChEBI" id="CHEBI:28518"/>
        <dbReference type="ChEBI" id="CHEBI:188998"/>
        <dbReference type="EC" id="5.3.1.5"/>
    </reaction>
</comment>
<comment type="cofactor">
    <cofactor evidence="1">
        <name>Mg(2+)</name>
        <dbReference type="ChEBI" id="CHEBI:18420"/>
    </cofactor>
    <text evidence="1">Binds 2 magnesium ions per subunit.</text>
</comment>
<comment type="subunit">
    <text evidence="1">Homotetramer.</text>
</comment>
<comment type="subcellular location">
    <subcellularLocation>
        <location evidence="1">Cytoplasm</location>
    </subcellularLocation>
</comment>
<comment type="similarity">
    <text evidence="1">Belongs to the xylose isomerase family.</text>
</comment>